<gene>
    <name evidence="1" type="primary">ybeY</name>
    <name type="ordered locus">Sbal_3263</name>
</gene>
<dbReference type="EC" id="3.1.-.-" evidence="1"/>
<dbReference type="EMBL" id="CP000563">
    <property type="protein sequence ID" value="ABN62743.1"/>
    <property type="molecule type" value="Genomic_DNA"/>
</dbReference>
<dbReference type="RefSeq" id="WP_011847532.1">
    <property type="nucleotide sequence ID" value="NC_009052.1"/>
</dbReference>
<dbReference type="SMR" id="A3D7N0"/>
<dbReference type="STRING" id="325240.Sbal_3263"/>
<dbReference type="KEGG" id="sbl:Sbal_3263"/>
<dbReference type="HOGENOM" id="CLU_106710_0_1_6"/>
<dbReference type="OrthoDB" id="9807740at2"/>
<dbReference type="Proteomes" id="UP000001557">
    <property type="component" value="Chromosome"/>
</dbReference>
<dbReference type="GO" id="GO:0005737">
    <property type="term" value="C:cytoplasm"/>
    <property type="evidence" value="ECO:0007669"/>
    <property type="project" value="UniProtKB-SubCell"/>
</dbReference>
<dbReference type="GO" id="GO:0004222">
    <property type="term" value="F:metalloendopeptidase activity"/>
    <property type="evidence" value="ECO:0007669"/>
    <property type="project" value="InterPro"/>
</dbReference>
<dbReference type="GO" id="GO:0004521">
    <property type="term" value="F:RNA endonuclease activity"/>
    <property type="evidence" value="ECO:0007669"/>
    <property type="project" value="UniProtKB-UniRule"/>
</dbReference>
<dbReference type="GO" id="GO:0008270">
    <property type="term" value="F:zinc ion binding"/>
    <property type="evidence" value="ECO:0007669"/>
    <property type="project" value="UniProtKB-UniRule"/>
</dbReference>
<dbReference type="GO" id="GO:0006364">
    <property type="term" value="P:rRNA processing"/>
    <property type="evidence" value="ECO:0007669"/>
    <property type="project" value="UniProtKB-UniRule"/>
</dbReference>
<dbReference type="Gene3D" id="3.40.390.30">
    <property type="entry name" value="Metalloproteases ('zincins'), catalytic domain"/>
    <property type="match status" value="1"/>
</dbReference>
<dbReference type="HAMAP" id="MF_00009">
    <property type="entry name" value="Endoribonucl_YbeY"/>
    <property type="match status" value="1"/>
</dbReference>
<dbReference type="InterPro" id="IPR023091">
    <property type="entry name" value="MetalPrtase_cat_dom_sf_prd"/>
</dbReference>
<dbReference type="InterPro" id="IPR002036">
    <property type="entry name" value="YbeY"/>
</dbReference>
<dbReference type="InterPro" id="IPR020549">
    <property type="entry name" value="YbeY_CS"/>
</dbReference>
<dbReference type="NCBIfam" id="TIGR00043">
    <property type="entry name" value="rRNA maturation RNase YbeY"/>
    <property type="match status" value="1"/>
</dbReference>
<dbReference type="PANTHER" id="PTHR46986">
    <property type="entry name" value="ENDORIBONUCLEASE YBEY, CHLOROPLASTIC"/>
    <property type="match status" value="1"/>
</dbReference>
<dbReference type="PANTHER" id="PTHR46986:SF1">
    <property type="entry name" value="ENDORIBONUCLEASE YBEY, CHLOROPLASTIC"/>
    <property type="match status" value="1"/>
</dbReference>
<dbReference type="Pfam" id="PF02130">
    <property type="entry name" value="YbeY"/>
    <property type="match status" value="1"/>
</dbReference>
<dbReference type="SUPFAM" id="SSF55486">
    <property type="entry name" value="Metalloproteases ('zincins'), catalytic domain"/>
    <property type="match status" value="1"/>
</dbReference>
<dbReference type="PROSITE" id="PS01306">
    <property type="entry name" value="UPF0054"/>
    <property type="match status" value="1"/>
</dbReference>
<accession>A3D7N0</accession>
<reference key="1">
    <citation type="submission" date="2007-02" db="EMBL/GenBank/DDBJ databases">
        <title>Complete sequence of chromosome of Shewanella baltica OS155.</title>
        <authorList>
            <consortium name="US DOE Joint Genome Institute"/>
            <person name="Copeland A."/>
            <person name="Lucas S."/>
            <person name="Lapidus A."/>
            <person name="Barry K."/>
            <person name="Detter J.C."/>
            <person name="Glavina del Rio T."/>
            <person name="Hammon N."/>
            <person name="Israni S."/>
            <person name="Dalin E."/>
            <person name="Tice H."/>
            <person name="Pitluck S."/>
            <person name="Sims D.R."/>
            <person name="Brettin T."/>
            <person name="Bruce D."/>
            <person name="Han C."/>
            <person name="Tapia R."/>
            <person name="Brainard J."/>
            <person name="Schmutz J."/>
            <person name="Larimer F."/>
            <person name="Land M."/>
            <person name="Hauser L."/>
            <person name="Kyrpides N."/>
            <person name="Mikhailova N."/>
            <person name="Brettar I."/>
            <person name="Klappenbach J."/>
            <person name="Konstantinidis K."/>
            <person name="Rodrigues J."/>
            <person name="Tiedje J."/>
            <person name="Richardson P."/>
        </authorList>
    </citation>
    <scope>NUCLEOTIDE SEQUENCE [LARGE SCALE GENOMIC DNA]</scope>
    <source>
        <strain>OS155 / ATCC BAA-1091</strain>
    </source>
</reference>
<proteinExistence type="inferred from homology"/>
<name>YBEY_SHEB5</name>
<organism>
    <name type="scientific">Shewanella baltica (strain OS155 / ATCC BAA-1091)</name>
    <dbReference type="NCBI Taxonomy" id="325240"/>
    <lineage>
        <taxon>Bacteria</taxon>
        <taxon>Pseudomonadati</taxon>
        <taxon>Pseudomonadota</taxon>
        <taxon>Gammaproteobacteria</taxon>
        <taxon>Alteromonadales</taxon>
        <taxon>Shewanellaceae</taxon>
        <taxon>Shewanella</taxon>
    </lineage>
</organism>
<protein>
    <recommendedName>
        <fullName evidence="1">Endoribonuclease YbeY</fullName>
        <ecNumber evidence="1">3.1.-.-</ecNumber>
    </recommendedName>
</protein>
<comment type="function">
    <text evidence="1">Single strand-specific metallo-endoribonuclease involved in late-stage 70S ribosome quality control and in maturation of the 3' terminus of the 16S rRNA.</text>
</comment>
<comment type="cofactor">
    <cofactor evidence="1">
        <name>Zn(2+)</name>
        <dbReference type="ChEBI" id="CHEBI:29105"/>
    </cofactor>
    <text evidence="1">Binds 1 zinc ion.</text>
</comment>
<comment type="subcellular location">
    <subcellularLocation>
        <location evidence="1">Cytoplasm</location>
    </subcellularLocation>
</comment>
<comment type="similarity">
    <text evidence="1">Belongs to the endoribonuclease YbeY family.</text>
</comment>
<evidence type="ECO:0000255" key="1">
    <source>
        <dbReference type="HAMAP-Rule" id="MF_00009"/>
    </source>
</evidence>
<keyword id="KW-0963">Cytoplasm</keyword>
<keyword id="KW-0255">Endonuclease</keyword>
<keyword id="KW-0378">Hydrolase</keyword>
<keyword id="KW-0479">Metal-binding</keyword>
<keyword id="KW-0540">Nuclease</keyword>
<keyword id="KW-1185">Reference proteome</keyword>
<keyword id="KW-0690">Ribosome biogenesis</keyword>
<keyword id="KW-0698">rRNA processing</keyword>
<keyword id="KW-0862">Zinc</keyword>
<feature type="chain" id="PRO_1000000741" description="Endoribonuclease YbeY">
    <location>
        <begin position="1"/>
        <end position="153"/>
    </location>
</feature>
<feature type="binding site" evidence="1">
    <location>
        <position position="114"/>
    </location>
    <ligand>
        <name>Zn(2+)</name>
        <dbReference type="ChEBI" id="CHEBI:29105"/>
        <note>catalytic</note>
    </ligand>
</feature>
<feature type="binding site" evidence="1">
    <location>
        <position position="118"/>
    </location>
    <ligand>
        <name>Zn(2+)</name>
        <dbReference type="ChEBI" id="CHEBI:29105"/>
        <note>catalytic</note>
    </ligand>
</feature>
<feature type="binding site" evidence="1">
    <location>
        <position position="124"/>
    </location>
    <ligand>
        <name>Zn(2+)</name>
        <dbReference type="ChEBI" id="CHEBI:29105"/>
        <note>catalytic</note>
    </ligand>
</feature>
<sequence length="153" mass="17270">MSLDLALDIQHATTCDWLPTDEQFALWATTAIGNSMDEAELTIRIVDTRESQMLNSTYRGKDKPTNVLSFPFEAPPEIELPLLGDLVICAAVVENEAREQQKTLEAHWAHMVVHGCLHLLGYDHIEDEEAEEMESLETQLIEGLGFTDPYKEQ</sequence>